<name>IEC5_SCHPO</name>
<comment type="function">
    <text evidence="2">Component of the INO80 complex which remodels chromatin by shifting nucleosomes and is involved in DNA repair.</text>
</comment>
<comment type="subunit">
    <text evidence="2">Component of the INO80 chromatin remodeling complex.</text>
</comment>
<comment type="subcellular location">
    <subcellularLocation>
        <location evidence="3">Nucleus</location>
    </subcellularLocation>
</comment>
<dbReference type="EMBL" id="FJ493251">
    <property type="protein sequence ID" value="ACL34424.1"/>
    <property type="molecule type" value="mRNA"/>
</dbReference>
<dbReference type="EMBL" id="CU329670">
    <property type="protein sequence ID" value="CBA11502.1"/>
    <property type="molecule type" value="Genomic_DNA"/>
</dbReference>
<dbReference type="RefSeq" id="XP_002742511.1">
    <property type="nucleotide sequence ID" value="XM_002742465.2"/>
</dbReference>
<dbReference type="SMR" id="B8Y7Y5"/>
<dbReference type="BioGRID" id="1028625">
    <property type="interactions" value="16"/>
</dbReference>
<dbReference type="STRING" id="284812.B8Y7Y5"/>
<dbReference type="iPTMnet" id="B8Y7Y5"/>
<dbReference type="PaxDb" id="4896-SPAPB1E7.14.1"/>
<dbReference type="EnsemblFungi" id="SPAPB1E7.14.1">
    <property type="protein sequence ID" value="SPAPB1E7.14.1:pep"/>
    <property type="gene ID" value="SPAPB1E7.14"/>
</dbReference>
<dbReference type="PomBase" id="SPAPB1E7.14">
    <property type="gene designation" value="iec5"/>
</dbReference>
<dbReference type="VEuPathDB" id="FungiDB:SPAPB1E7.14"/>
<dbReference type="HOGENOM" id="CLU_1797586_0_0_1"/>
<dbReference type="InParanoid" id="B8Y7Y5"/>
<dbReference type="OMA" id="DQDQWNS"/>
<dbReference type="PRO" id="PR:B8Y7Y5"/>
<dbReference type="Proteomes" id="UP000002485">
    <property type="component" value="Chromosome I"/>
</dbReference>
<dbReference type="GO" id="GO:0031011">
    <property type="term" value="C:Ino80 complex"/>
    <property type="evidence" value="ECO:0000314"/>
    <property type="project" value="PomBase"/>
</dbReference>
<dbReference type="GO" id="GO:0005634">
    <property type="term" value="C:nucleus"/>
    <property type="evidence" value="ECO:0000314"/>
    <property type="project" value="PomBase"/>
</dbReference>
<dbReference type="GO" id="GO:0006281">
    <property type="term" value="P:DNA repair"/>
    <property type="evidence" value="ECO:0007669"/>
    <property type="project" value="UniProtKB-KW"/>
</dbReference>
<dbReference type="GO" id="GO:0006335">
    <property type="term" value="P:DNA replication-dependent chromatin assembly"/>
    <property type="evidence" value="ECO:0000315"/>
    <property type="project" value="PomBase"/>
</dbReference>
<dbReference type="GO" id="GO:0045815">
    <property type="term" value="P:transcription initiation-coupled chromatin remodeling"/>
    <property type="evidence" value="ECO:0000305"/>
    <property type="project" value="PomBase"/>
</dbReference>
<sequence length="144" mass="16897">MAAQKKQGERVLPARSTRKRRQLPDMLYYDERTDSYVTPQERSLSEANAQTRPAPNTINQAVDAKQSAREARVQELMKSKLYHLRKQQKQARHKRDQWAIDYLEWKKNEDEDVWNSDAEATGPAEHTSSFLDALRFSQQFMKAE</sequence>
<feature type="chain" id="PRO_0000389111" description="INO80 complex subunit 5">
    <location>
        <begin position="1"/>
        <end position="144"/>
    </location>
</feature>
<feature type="region of interest" description="Disordered" evidence="1">
    <location>
        <begin position="1"/>
        <end position="58"/>
    </location>
</feature>
<feature type="compositionally biased region" description="Polar residues" evidence="1">
    <location>
        <begin position="35"/>
        <end position="58"/>
    </location>
</feature>
<evidence type="ECO:0000256" key="1">
    <source>
        <dbReference type="SAM" id="MobiDB-lite"/>
    </source>
</evidence>
<evidence type="ECO:0000269" key="2">
    <source>
    </source>
</evidence>
<evidence type="ECO:0000305" key="3"/>
<keyword id="KW-0156">Chromatin regulator</keyword>
<keyword id="KW-0227">DNA damage</keyword>
<keyword id="KW-0234">DNA repair</keyword>
<keyword id="KW-0539">Nucleus</keyword>
<keyword id="KW-1185">Reference proteome</keyword>
<keyword id="KW-0804">Transcription</keyword>
<keyword id="KW-0805">Transcription regulation</keyword>
<gene>
    <name type="primary">iec5</name>
    <name type="ORF">SPAPB1E7.14</name>
</gene>
<reference key="1">
    <citation type="journal article" date="2008" name="Genome Biol.">
        <title>Chromatin Central: towards the comparative proteome by accurate mapping of the yeast proteomic environment.</title>
        <authorList>
            <person name="Shevchenko A."/>
            <person name="Roguev A."/>
            <person name="Schaft D."/>
            <person name="Buchanan L."/>
            <person name="Habermann B."/>
            <person name="Sakalar C."/>
            <person name="Thomas H."/>
            <person name="Krogan N.J."/>
            <person name="Shevchenko A."/>
            <person name="Stewart A.F."/>
        </authorList>
    </citation>
    <scope>NUCLEOTIDE SEQUENCE [MRNA]</scope>
    <scope>FUNCTION</scope>
    <scope>IDENTIFICATION IN THE INO80 COMPLEX</scope>
    <scope>IDENTIFICATION BY MASS SPECTROMETRY</scope>
</reference>
<reference key="2">
    <citation type="journal article" date="2002" name="Nature">
        <title>The genome sequence of Schizosaccharomyces pombe.</title>
        <authorList>
            <person name="Wood V."/>
            <person name="Gwilliam R."/>
            <person name="Rajandream M.A."/>
            <person name="Lyne M.H."/>
            <person name="Lyne R."/>
            <person name="Stewart A."/>
            <person name="Sgouros J.G."/>
            <person name="Peat N."/>
            <person name="Hayles J."/>
            <person name="Baker S.G."/>
            <person name="Basham D."/>
            <person name="Bowman S."/>
            <person name="Brooks K."/>
            <person name="Brown D."/>
            <person name="Brown S."/>
            <person name="Chillingworth T."/>
            <person name="Churcher C.M."/>
            <person name="Collins M."/>
            <person name="Connor R."/>
            <person name="Cronin A."/>
            <person name="Davis P."/>
            <person name="Feltwell T."/>
            <person name="Fraser A."/>
            <person name="Gentles S."/>
            <person name="Goble A."/>
            <person name="Hamlin N."/>
            <person name="Harris D.E."/>
            <person name="Hidalgo J."/>
            <person name="Hodgson G."/>
            <person name="Holroyd S."/>
            <person name="Hornsby T."/>
            <person name="Howarth S."/>
            <person name="Huckle E.J."/>
            <person name="Hunt S."/>
            <person name="Jagels K."/>
            <person name="James K.D."/>
            <person name="Jones L."/>
            <person name="Jones M."/>
            <person name="Leather S."/>
            <person name="McDonald S."/>
            <person name="McLean J."/>
            <person name="Mooney P."/>
            <person name="Moule S."/>
            <person name="Mungall K.L."/>
            <person name="Murphy L.D."/>
            <person name="Niblett D."/>
            <person name="Odell C."/>
            <person name="Oliver K."/>
            <person name="O'Neil S."/>
            <person name="Pearson D."/>
            <person name="Quail M.A."/>
            <person name="Rabbinowitsch E."/>
            <person name="Rutherford K.M."/>
            <person name="Rutter S."/>
            <person name="Saunders D."/>
            <person name="Seeger K."/>
            <person name="Sharp S."/>
            <person name="Skelton J."/>
            <person name="Simmonds M.N."/>
            <person name="Squares R."/>
            <person name="Squares S."/>
            <person name="Stevens K."/>
            <person name="Taylor K."/>
            <person name="Taylor R.G."/>
            <person name="Tivey A."/>
            <person name="Walsh S.V."/>
            <person name="Warren T."/>
            <person name="Whitehead S."/>
            <person name="Woodward J.R."/>
            <person name="Volckaert G."/>
            <person name="Aert R."/>
            <person name="Robben J."/>
            <person name="Grymonprez B."/>
            <person name="Weltjens I."/>
            <person name="Vanstreels E."/>
            <person name="Rieger M."/>
            <person name="Schaefer M."/>
            <person name="Mueller-Auer S."/>
            <person name="Gabel C."/>
            <person name="Fuchs M."/>
            <person name="Duesterhoeft A."/>
            <person name="Fritzc C."/>
            <person name="Holzer E."/>
            <person name="Moestl D."/>
            <person name="Hilbert H."/>
            <person name="Borzym K."/>
            <person name="Langer I."/>
            <person name="Beck A."/>
            <person name="Lehrach H."/>
            <person name="Reinhardt R."/>
            <person name="Pohl T.M."/>
            <person name="Eger P."/>
            <person name="Zimmermann W."/>
            <person name="Wedler H."/>
            <person name="Wambutt R."/>
            <person name="Purnelle B."/>
            <person name="Goffeau A."/>
            <person name="Cadieu E."/>
            <person name="Dreano S."/>
            <person name="Gloux S."/>
            <person name="Lelaure V."/>
            <person name="Mottier S."/>
            <person name="Galibert F."/>
            <person name="Aves S.J."/>
            <person name="Xiang Z."/>
            <person name="Hunt C."/>
            <person name="Moore K."/>
            <person name="Hurst S.M."/>
            <person name="Lucas M."/>
            <person name="Rochet M."/>
            <person name="Gaillardin C."/>
            <person name="Tallada V.A."/>
            <person name="Garzon A."/>
            <person name="Thode G."/>
            <person name="Daga R.R."/>
            <person name="Cruzado L."/>
            <person name="Jimenez J."/>
            <person name="Sanchez M."/>
            <person name="del Rey F."/>
            <person name="Benito J."/>
            <person name="Dominguez A."/>
            <person name="Revuelta J.L."/>
            <person name="Moreno S."/>
            <person name="Armstrong J."/>
            <person name="Forsburg S.L."/>
            <person name="Cerutti L."/>
            <person name="Lowe T."/>
            <person name="McCombie W.R."/>
            <person name="Paulsen I."/>
            <person name="Potashkin J."/>
            <person name="Shpakovski G.V."/>
            <person name="Ussery D."/>
            <person name="Barrell B.G."/>
            <person name="Nurse P."/>
        </authorList>
    </citation>
    <scope>NUCLEOTIDE SEQUENCE [LARGE SCALE GENOMIC DNA]</scope>
    <source>
        <strain>972 / ATCC 24843</strain>
    </source>
</reference>
<protein>
    <recommendedName>
        <fullName>INO80 complex subunit 5</fullName>
    </recommendedName>
</protein>
<accession>B8Y7Y5</accession>
<organism>
    <name type="scientific">Schizosaccharomyces pombe (strain 972 / ATCC 24843)</name>
    <name type="common">Fission yeast</name>
    <dbReference type="NCBI Taxonomy" id="284812"/>
    <lineage>
        <taxon>Eukaryota</taxon>
        <taxon>Fungi</taxon>
        <taxon>Dikarya</taxon>
        <taxon>Ascomycota</taxon>
        <taxon>Taphrinomycotina</taxon>
        <taxon>Schizosaccharomycetes</taxon>
        <taxon>Schizosaccharomycetales</taxon>
        <taxon>Schizosaccharomycetaceae</taxon>
        <taxon>Schizosaccharomyces</taxon>
    </lineage>
</organism>
<proteinExistence type="evidence at protein level"/>